<accession>Q99NB8</accession>
<accession>Q8BP88</accession>
<gene>
    <name evidence="13" type="primary">Ubqln4</name>
    <name evidence="11" type="synonym">Cip75</name>
    <name evidence="10" type="synonym">Ubin</name>
</gene>
<keyword id="KW-0002">3D-structure</keyword>
<keyword id="KW-0072">Autophagy</keyword>
<keyword id="KW-0158">Chromosome</keyword>
<keyword id="KW-0963">Cytoplasm</keyword>
<keyword id="KW-0968">Cytoplasmic vesicle</keyword>
<keyword id="KW-0227">DNA damage</keyword>
<keyword id="KW-0234">DNA repair</keyword>
<keyword id="KW-0256">Endoplasmic reticulum</keyword>
<keyword id="KW-1017">Isopeptide bond</keyword>
<keyword id="KW-0539">Nucleus</keyword>
<keyword id="KW-0597">Phosphoprotein</keyword>
<keyword id="KW-1185">Reference proteome</keyword>
<keyword id="KW-0832">Ubl conjugation</keyword>
<proteinExistence type="evidence at protein level"/>
<sequence>MAEPSGAETRPQIRVTVKTPKDKEEIVICDQASVKEFKEEISRRFKAQQDQLVLIFAGKILKDGDTLSQHGIKDGLTVHLVIKTPQKAQDPVTAAASPPSTPDSASAPSTTPASPAAAPVQPCSSGNTTSDAGSGGGPSPVAAEGPSSATASILSGFGGILGLGSLGLGSANFMELQQQMQRQLMSNPEMLSQIMENPLVQDMMSNPDLMRHMIMANPQMQQLMERNPEISHMLNNPELMRQTMELARNPAMMQEMMRNQDRALSNLESVPGGYNALRRMYTDIQEPMFTAAREQFGNNPFSSLAGNSDNSSSQPLRTENREPLPNPWSPSPPTSQAPGSGGEGTGGSGTSQVHPTVSNPFGINAASLGSGMFNSPEMQALLQQISENPQLMQNVISAPYMRTMMQTLAQNPDFAAQMMVNVPLFAGNPQLQEQLRLQLPVFLQQMQNPESLSILTNPRAMQALLQIQQGLQTLQTEAPGLVPSLGSFGTPRTSVPLAGSNSGSSAEAPTSSPGVPATSPPSAGSNAQQQLMQQMIQLLSGSGNSQVPMPEVRFQQQLEQLNSMGFINREANLQALIATGGDINAAIERLLGSQLS</sequence>
<protein>
    <recommendedName>
        <fullName evidence="12">Ubiquilin-4</fullName>
    </recommendedName>
    <alternativeName>
        <fullName evidence="12">Ataxin-1 interacting ubiquitin-like protein</fullName>
        <shortName evidence="1">A1Up</shortName>
    </alternativeName>
    <alternativeName>
        <fullName>Ataxin-1 ubiquitin-like-interacting protein A1U</fullName>
    </alternativeName>
    <alternativeName>
        <fullName evidence="11">Connexin43-interacting protein of 75 kDa</fullName>
        <shortName evidence="11">CIP75</shortName>
    </alternativeName>
</protein>
<dbReference type="EMBL" id="AB040050">
    <property type="protein sequence ID" value="BAB40326.1"/>
    <property type="molecule type" value="mRNA"/>
</dbReference>
<dbReference type="EMBL" id="BC017686">
    <property type="protein sequence ID" value="AAH17686.1"/>
    <property type="molecule type" value="mRNA"/>
</dbReference>
<dbReference type="EMBL" id="AK077511">
    <property type="protein sequence ID" value="BAC36837.1"/>
    <property type="molecule type" value="mRNA"/>
</dbReference>
<dbReference type="CCDS" id="CCDS17479.1"/>
<dbReference type="RefSeq" id="NP_277068.1">
    <property type="nucleotide sequence ID" value="NM_033526.3"/>
</dbReference>
<dbReference type="PDB" id="2KNZ">
    <property type="method" value="NMR"/>
    <property type="chains" value="A=549-596"/>
</dbReference>
<dbReference type="PDBsum" id="2KNZ"/>
<dbReference type="BMRB" id="Q99NB8"/>
<dbReference type="SMR" id="Q99NB8"/>
<dbReference type="BioGRID" id="220488">
    <property type="interactions" value="49"/>
</dbReference>
<dbReference type="FunCoup" id="Q99NB8">
    <property type="interactions" value="4195"/>
</dbReference>
<dbReference type="IntAct" id="Q99NB8">
    <property type="interactions" value="3"/>
</dbReference>
<dbReference type="STRING" id="10090.ENSMUSP00000008748"/>
<dbReference type="GlyGen" id="Q99NB8">
    <property type="glycosylation" value="4 sites, 1 O-linked glycan (1 site)"/>
</dbReference>
<dbReference type="iPTMnet" id="Q99NB8"/>
<dbReference type="PhosphoSitePlus" id="Q99NB8"/>
<dbReference type="jPOST" id="Q99NB8"/>
<dbReference type="PaxDb" id="10090-ENSMUSP00000008748"/>
<dbReference type="PeptideAtlas" id="Q99NB8"/>
<dbReference type="ProteomicsDB" id="298423"/>
<dbReference type="Pumba" id="Q99NB8"/>
<dbReference type="Antibodypedia" id="34204">
    <property type="antibodies" value="122 antibodies from 26 providers"/>
</dbReference>
<dbReference type="DNASU" id="94232"/>
<dbReference type="Ensembl" id="ENSMUST00000008748.8">
    <property type="protein sequence ID" value="ENSMUSP00000008748.7"/>
    <property type="gene ID" value="ENSMUSG00000008604.12"/>
</dbReference>
<dbReference type="GeneID" id="94232"/>
<dbReference type="KEGG" id="mmu:94232"/>
<dbReference type="UCSC" id="uc008pvq.1">
    <property type="organism name" value="mouse"/>
</dbReference>
<dbReference type="AGR" id="MGI:2150152"/>
<dbReference type="CTD" id="56893"/>
<dbReference type="MGI" id="MGI:2150152">
    <property type="gene designation" value="Ubqln4"/>
</dbReference>
<dbReference type="VEuPathDB" id="HostDB:ENSMUSG00000008604"/>
<dbReference type="eggNOG" id="KOG0010">
    <property type="taxonomic scope" value="Eukaryota"/>
</dbReference>
<dbReference type="GeneTree" id="ENSGT00940000155620"/>
<dbReference type="HOGENOM" id="CLU_024293_4_0_1"/>
<dbReference type="InParanoid" id="Q99NB8"/>
<dbReference type="OMA" id="EVRFQTQ"/>
<dbReference type="OrthoDB" id="9450922at2759"/>
<dbReference type="PhylomeDB" id="Q99NB8"/>
<dbReference type="TreeFam" id="TF314412"/>
<dbReference type="BioGRID-ORCS" id="94232">
    <property type="hits" value="4 hits in 81 CRISPR screens"/>
</dbReference>
<dbReference type="ChiTaRS" id="Ubqln4">
    <property type="organism name" value="mouse"/>
</dbReference>
<dbReference type="EvolutionaryTrace" id="Q99NB8"/>
<dbReference type="PRO" id="PR:Q99NB8"/>
<dbReference type="Proteomes" id="UP000000589">
    <property type="component" value="Chromosome 3"/>
</dbReference>
<dbReference type="RNAct" id="Q99NB8">
    <property type="molecule type" value="protein"/>
</dbReference>
<dbReference type="Bgee" id="ENSMUSG00000008604">
    <property type="expression patterns" value="Expressed in ventricular zone and 257 other cell types or tissues"/>
</dbReference>
<dbReference type="ExpressionAtlas" id="Q99NB8">
    <property type="expression patterns" value="baseline and differential"/>
</dbReference>
<dbReference type="GO" id="GO:0005776">
    <property type="term" value="C:autophagosome"/>
    <property type="evidence" value="ECO:0007669"/>
    <property type="project" value="UniProtKB-SubCell"/>
</dbReference>
<dbReference type="GO" id="GO:0005737">
    <property type="term" value="C:cytoplasm"/>
    <property type="evidence" value="ECO:0000250"/>
    <property type="project" value="UniProtKB"/>
</dbReference>
<dbReference type="GO" id="GO:0031410">
    <property type="term" value="C:cytoplasmic vesicle"/>
    <property type="evidence" value="ECO:0007669"/>
    <property type="project" value="UniProtKB-KW"/>
</dbReference>
<dbReference type="GO" id="GO:0005829">
    <property type="term" value="C:cytosol"/>
    <property type="evidence" value="ECO:0000314"/>
    <property type="project" value="MGI"/>
</dbReference>
<dbReference type="GO" id="GO:0031597">
    <property type="term" value="C:cytosolic proteasome complex"/>
    <property type="evidence" value="ECO:0007669"/>
    <property type="project" value="Ensembl"/>
</dbReference>
<dbReference type="GO" id="GO:0005789">
    <property type="term" value="C:endoplasmic reticulum membrane"/>
    <property type="evidence" value="ECO:0000314"/>
    <property type="project" value="MGI"/>
</dbReference>
<dbReference type="GO" id="GO:0031595">
    <property type="term" value="C:nuclear proteasome complex"/>
    <property type="evidence" value="ECO:0007669"/>
    <property type="project" value="Ensembl"/>
</dbReference>
<dbReference type="GO" id="GO:0005654">
    <property type="term" value="C:nucleoplasm"/>
    <property type="evidence" value="ECO:0007669"/>
    <property type="project" value="Ensembl"/>
</dbReference>
<dbReference type="GO" id="GO:0005634">
    <property type="term" value="C:nucleus"/>
    <property type="evidence" value="ECO:0000250"/>
    <property type="project" value="UniProtKB"/>
</dbReference>
<dbReference type="GO" id="GO:0048471">
    <property type="term" value="C:perinuclear region of cytoplasm"/>
    <property type="evidence" value="ECO:0007669"/>
    <property type="project" value="UniProtKB-SubCell"/>
</dbReference>
<dbReference type="GO" id="GO:0090734">
    <property type="term" value="C:site of DNA damage"/>
    <property type="evidence" value="ECO:0000250"/>
    <property type="project" value="UniProtKB"/>
</dbReference>
<dbReference type="GO" id="GO:0042802">
    <property type="term" value="F:identical protein binding"/>
    <property type="evidence" value="ECO:0007669"/>
    <property type="project" value="Ensembl"/>
</dbReference>
<dbReference type="GO" id="GO:0036435">
    <property type="term" value="F:K48-linked polyubiquitin modification-dependent protein binding"/>
    <property type="evidence" value="ECO:0007669"/>
    <property type="project" value="Ensembl"/>
</dbReference>
<dbReference type="GO" id="GO:0031593">
    <property type="term" value="F:polyubiquitin modification-dependent protein binding"/>
    <property type="evidence" value="ECO:0000250"/>
    <property type="project" value="UniProtKB"/>
</dbReference>
<dbReference type="GO" id="GO:0006914">
    <property type="term" value="P:autophagy"/>
    <property type="evidence" value="ECO:0007669"/>
    <property type="project" value="UniProtKB-KW"/>
</dbReference>
<dbReference type="GO" id="GO:0006974">
    <property type="term" value="P:DNA damage response"/>
    <property type="evidence" value="ECO:0000250"/>
    <property type="project" value="UniProtKB"/>
</dbReference>
<dbReference type="GO" id="GO:0006281">
    <property type="term" value="P:DNA repair"/>
    <property type="evidence" value="ECO:0007669"/>
    <property type="project" value="UniProtKB-KW"/>
</dbReference>
<dbReference type="GO" id="GO:1901097">
    <property type="term" value="P:negative regulation of autophagosome maturation"/>
    <property type="evidence" value="ECO:0007669"/>
    <property type="project" value="Ensembl"/>
</dbReference>
<dbReference type="GO" id="GO:2000042">
    <property type="term" value="P:negative regulation of double-strand break repair via homologous recombination"/>
    <property type="evidence" value="ECO:0000250"/>
    <property type="project" value="UniProtKB"/>
</dbReference>
<dbReference type="GO" id="GO:0032434">
    <property type="term" value="P:regulation of proteasomal ubiquitin-dependent protein catabolic process"/>
    <property type="evidence" value="ECO:0000250"/>
    <property type="project" value="UniProtKB"/>
</dbReference>
<dbReference type="CDD" id="cd14399">
    <property type="entry name" value="UBA_PLICs"/>
    <property type="match status" value="1"/>
</dbReference>
<dbReference type="CDD" id="cd01808">
    <property type="entry name" value="Ubl_PLICs"/>
    <property type="match status" value="1"/>
</dbReference>
<dbReference type="FunFam" id="1.10.260.100:FF:000001">
    <property type="entry name" value="Ubiquilin 1"/>
    <property type="match status" value="1"/>
</dbReference>
<dbReference type="FunFam" id="1.10.260.100:FF:000003">
    <property type="entry name" value="Ubiquilin 1"/>
    <property type="match status" value="1"/>
</dbReference>
<dbReference type="FunFam" id="1.10.8.10:FF:000007">
    <property type="entry name" value="Ubiquilin 1"/>
    <property type="match status" value="1"/>
</dbReference>
<dbReference type="FunFam" id="3.10.20.90:FF:000095">
    <property type="entry name" value="Ubiquilin 4"/>
    <property type="match status" value="1"/>
</dbReference>
<dbReference type="Gene3D" id="1.10.260.100">
    <property type="match status" value="2"/>
</dbReference>
<dbReference type="Gene3D" id="1.10.8.10">
    <property type="entry name" value="DNA helicase RuvA subunit, C-terminal domain"/>
    <property type="match status" value="1"/>
</dbReference>
<dbReference type="Gene3D" id="3.10.20.90">
    <property type="entry name" value="Phosphatidylinositol 3-kinase Catalytic Subunit, Chain A, domain 1"/>
    <property type="match status" value="1"/>
</dbReference>
<dbReference type="InterPro" id="IPR006636">
    <property type="entry name" value="STI1_HS-bd"/>
</dbReference>
<dbReference type="InterPro" id="IPR015940">
    <property type="entry name" value="UBA"/>
</dbReference>
<dbReference type="InterPro" id="IPR009060">
    <property type="entry name" value="UBA-like_sf"/>
</dbReference>
<dbReference type="InterPro" id="IPR015496">
    <property type="entry name" value="Ubiquilin"/>
</dbReference>
<dbReference type="InterPro" id="IPR000626">
    <property type="entry name" value="Ubiquitin-like_dom"/>
</dbReference>
<dbReference type="InterPro" id="IPR029071">
    <property type="entry name" value="Ubiquitin-like_domsf"/>
</dbReference>
<dbReference type="PANTHER" id="PTHR10677">
    <property type="entry name" value="UBIQUILIN"/>
    <property type="match status" value="1"/>
</dbReference>
<dbReference type="PANTHER" id="PTHR10677:SF21">
    <property type="entry name" value="UBIQUILIN-4"/>
    <property type="match status" value="1"/>
</dbReference>
<dbReference type="Pfam" id="PF00627">
    <property type="entry name" value="UBA"/>
    <property type="match status" value="1"/>
</dbReference>
<dbReference type="Pfam" id="PF00240">
    <property type="entry name" value="ubiquitin"/>
    <property type="match status" value="1"/>
</dbReference>
<dbReference type="Pfam" id="PF23195">
    <property type="entry name" value="UBQLN1"/>
    <property type="match status" value="1"/>
</dbReference>
<dbReference type="SMART" id="SM00727">
    <property type="entry name" value="STI1"/>
    <property type="match status" value="4"/>
</dbReference>
<dbReference type="SMART" id="SM00165">
    <property type="entry name" value="UBA"/>
    <property type="match status" value="1"/>
</dbReference>
<dbReference type="SMART" id="SM00213">
    <property type="entry name" value="UBQ"/>
    <property type="match status" value="1"/>
</dbReference>
<dbReference type="SUPFAM" id="SSF46934">
    <property type="entry name" value="UBA-like"/>
    <property type="match status" value="1"/>
</dbReference>
<dbReference type="SUPFAM" id="SSF54236">
    <property type="entry name" value="Ubiquitin-like"/>
    <property type="match status" value="1"/>
</dbReference>
<dbReference type="PROSITE" id="PS50030">
    <property type="entry name" value="UBA"/>
    <property type="match status" value="1"/>
</dbReference>
<dbReference type="PROSITE" id="PS50053">
    <property type="entry name" value="UBIQUITIN_2"/>
    <property type="match status" value="1"/>
</dbReference>
<name>UBQL4_MOUSE</name>
<organism>
    <name type="scientific">Mus musculus</name>
    <name type="common">Mouse</name>
    <dbReference type="NCBI Taxonomy" id="10090"/>
    <lineage>
        <taxon>Eukaryota</taxon>
        <taxon>Metazoa</taxon>
        <taxon>Chordata</taxon>
        <taxon>Craniata</taxon>
        <taxon>Vertebrata</taxon>
        <taxon>Euteleostomi</taxon>
        <taxon>Mammalia</taxon>
        <taxon>Eutheria</taxon>
        <taxon>Euarchontoglires</taxon>
        <taxon>Glires</taxon>
        <taxon>Rodentia</taxon>
        <taxon>Myomorpha</taxon>
        <taxon>Muroidea</taxon>
        <taxon>Muridae</taxon>
        <taxon>Murinae</taxon>
        <taxon>Mus</taxon>
        <taxon>Mus</taxon>
    </lineage>
</organism>
<evidence type="ECO:0000250" key="1">
    <source>
        <dbReference type="UniProtKB" id="Q9NRR5"/>
    </source>
</evidence>
<evidence type="ECO:0000255" key="2"/>
<evidence type="ECO:0000255" key="3">
    <source>
        <dbReference type="PROSITE-ProRule" id="PRU00212"/>
    </source>
</evidence>
<evidence type="ECO:0000255" key="4">
    <source>
        <dbReference type="PROSITE-ProRule" id="PRU00214"/>
    </source>
</evidence>
<evidence type="ECO:0000256" key="5">
    <source>
        <dbReference type="SAM" id="MobiDB-lite"/>
    </source>
</evidence>
<evidence type="ECO:0000269" key="6">
    <source>
    </source>
</evidence>
<evidence type="ECO:0000269" key="7">
    <source>
    </source>
</evidence>
<evidence type="ECO:0000269" key="8">
    <source>
    </source>
</evidence>
<evidence type="ECO:0000269" key="9">
    <source>
    </source>
</evidence>
<evidence type="ECO:0000303" key="10">
    <source>
    </source>
</evidence>
<evidence type="ECO:0000303" key="11">
    <source>
    </source>
</evidence>
<evidence type="ECO:0000305" key="12"/>
<evidence type="ECO:0000312" key="13">
    <source>
        <dbReference type="MGI" id="MGI:2150152"/>
    </source>
</evidence>
<evidence type="ECO:0007829" key="14">
    <source>
        <dbReference type="PDB" id="2KNZ"/>
    </source>
</evidence>
<reference key="1">
    <citation type="journal article" date="2001" name="Biochem. Biophys. Res. Commun.">
        <title>Molecular cloning of a novel ubiquitin-like protein, UBIN, that binds to ER targeting signal sequences.</title>
        <authorList>
            <person name="Matsuda M."/>
            <person name="Koide T."/>
            <person name="Yorihuzi T."/>
            <person name="Hosokawa N."/>
            <person name="Nagata K."/>
        </authorList>
    </citation>
    <scope>NUCLEOTIDE SEQUENCE [MRNA]</scope>
    <scope>INTERACTION WITH SIGNAL SEQUENCES</scope>
    <scope>SUBCELLULAR LOCATION</scope>
    <scope>TISSUE SPECIFICITY</scope>
    <source>
        <tissue>Embryo</tissue>
    </source>
</reference>
<reference key="2">
    <citation type="journal article" date="2004" name="Genome Res.">
        <title>The status, quality, and expansion of the NIH full-length cDNA project: the Mammalian Gene Collection (MGC).</title>
        <authorList>
            <consortium name="The MGC Project Team"/>
        </authorList>
    </citation>
    <scope>NUCLEOTIDE SEQUENCE [LARGE SCALE MRNA]</scope>
    <source>
        <tissue>Kidney</tissue>
    </source>
</reference>
<reference key="3">
    <citation type="journal article" date="2005" name="Science">
        <title>The transcriptional landscape of the mammalian genome.</title>
        <authorList>
            <person name="Carninci P."/>
            <person name="Kasukawa T."/>
            <person name="Katayama S."/>
            <person name="Gough J."/>
            <person name="Frith M.C."/>
            <person name="Maeda N."/>
            <person name="Oyama R."/>
            <person name="Ravasi T."/>
            <person name="Lenhard B."/>
            <person name="Wells C."/>
            <person name="Kodzius R."/>
            <person name="Shimokawa K."/>
            <person name="Bajic V.B."/>
            <person name="Brenner S.E."/>
            <person name="Batalov S."/>
            <person name="Forrest A.R."/>
            <person name="Zavolan M."/>
            <person name="Davis M.J."/>
            <person name="Wilming L.G."/>
            <person name="Aidinis V."/>
            <person name="Allen J.E."/>
            <person name="Ambesi-Impiombato A."/>
            <person name="Apweiler R."/>
            <person name="Aturaliya R.N."/>
            <person name="Bailey T.L."/>
            <person name="Bansal M."/>
            <person name="Baxter L."/>
            <person name="Beisel K.W."/>
            <person name="Bersano T."/>
            <person name="Bono H."/>
            <person name="Chalk A.M."/>
            <person name="Chiu K.P."/>
            <person name="Choudhary V."/>
            <person name="Christoffels A."/>
            <person name="Clutterbuck D.R."/>
            <person name="Crowe M.L."/>
            <person name="Dalla E."/>
            <person name="Dalrymple B.P."/>
            <person name="de Bono B."/>
            <person name="Della Gatta G."/>
            <person name="di Bernardo D."/>
            <person name="Down T."/>
            <person name="Engstrom P."/>
            <person name="Fagiolini M."/>
            <person name="Faulkner G."/>
            <person name="Fletcher C.F."/>
            <person name="Fukushima T."/>
            <person name="Furuno M."/>
            <person name="Futaki S."/>
            <person name="Gariboldi M."/>
            <person name="Georgii-Hemming P."/>
            <person name="Gingeras T.R."/>
            <person name="Gojobori T."/>
            <person name="Green R.E."/>
            <person name="Gustincich S."/>
            <person name="Harbers M."/>
            <person name="Hayashi Y."/>
            <person name="Hensch T.K."/>
            <person name="Hirokawa N."/>
            <person name="Hill D."/>
            <person name="Huminiecki L."/>
            <person name="Iacono M."/>
            <person name="Ikeo K."/>
            <person name="Iwama A."/>
            <person name="Ishikawa T."/>
            <person name="Jakt M."/>
            <person name="Kanapin A."/>
            <person name="Katoh M."/>
            <person name="Kawasawa Y."/>
            <person name="Kelso J."/>
            <person name="Kitamura H."/>
            <person name="Kitano H."/>
            <person name="Kollias G."/>
            <person name="Krishnan S.P."/>
            <person name="Kruger A."/>
            <person name="Kummerfeld S.K."/>
            <person name="Kurochkin I.V."/>
            <person name="Lareau L.F."/>
            <person name="Lazarevic D."/>
            <person name="Lipovich L."/>
            <person name="Liu J."/>
            <person name="Liuni S."/>
            <person name="McWilliam S."/>
            <person name="Madan Babu M."/>
            <person name="Madera M."/>
            <person name="Marchionni L."/>
            <person name="Matsuda H."/>
            <person name="Matsuzawa S."/>
            <person name="Miki H."/>
            <person name="Mignone F."/>
            <person name="Miyake S."/>
            <person name="Morris K."/>
            <person name="Mottagui-Tabar S."/>
            <person name="Mulder N."/>
            <person name="Nakano N."/>
            <person name="Nakauchi H."/>
            <person name="Ng P."/>
            <person name="Nilsson R."/>
            <person name="Nishiguchi S."/>
            <person name="Nishikawa S."/>
            <person name="Nori F."/>
            <person name="Ohara O."/>
            <person name="Okazaki Y."/>
            <person name="Orlando V."/>
            <person name="Pang K.C."/>
            <person name="Pavan W.J."/>
            <person name="Pavesi G."/>
            <person name="Pesole G."/>
            <person name="Petrovsky N."/>
            <person name="Piazza S."/>
            <person name="Reed J."/>
            <person name="Reid J.F."/>
            <person name="Ring B.Z."/>
            <person name="Ringwald M."/>
            <person name="Rost B."/>
            <person name="Ruan Y."/>
            <person name="Salzberg S.L."/>
            <person name="Sandelin A."/>
            <person name="Schneider C."/>
            <person name="Schoenbach C."/>
            <person name="Sekiguchi K."/>
            <person name="Semple C.A."/>
            <person name="Seno S."/>
            <person name="Sessa L."/>
            <person name="Sheng Y."/>
            <person name="Shibata Y."/>
            <person name="Shimada H."/>
            <person name="Shimada K."/>
            <person name="Silva D."/>
            <person name="Sinclair B."/>
            <person name="Sperling S."/>
            <person name="Stupka E."/>
            <person name="Sugiura K."/>
            <person name="Sultana R."/>
            <person name="Takenaka Y."/>
            <person name="Taki K."/>
            <person name="Tammoja K."/>
            <person name="Tan S.L."/>
            <person name="Tang S."/>
            <person name="Taylor M.S."/>
            <person name="Tegner J."/>
            <person name="Teichmann S.A."/>
            <person name="Ueda H.R."/>
            <person name="van Nimwegen E."/>
            <person name="Verardo R."/>
            <person name="Wei C.L."/>
            <person name="Yagi K."/>
            <person name="Yamanishi H."/>
            <person name="Zabarovsky E."/>
            <person name="Zhu S."/>
            <person name="Zimmer A."/>
            <person name="Hide W."/>
            <person name="Bult C."/>
            <person name="Grimmond S.M."/>
            <person name="Teasdale R.D."/>
            <person name="Liu E.T."/>
            <person name="Brusic V."/>
            <person name="Quackenbush J."/>
            <person name="Wahlestedt C."/>
            <person name="Mattick J.S."/>
            <person name="Hume D.A."/>
            <person name="Kai C."/>
            <person name="Sasaki D."/>
            <person name="Tomaru Y."/>
            <person name="Fukuda S."/>
            <person name="Kanamori-Katayama M."/>
            <person name="Suzuki M."/>
            <person name="Aoki J."/>
            <person name="Arakawa T."/>
            <person name="Iida J."/>
            <person name="Imamura K."/>
            <person name="Itoh M."/>
            <person name="Kato T."/>
            <person name="Kawaji H."/>
            <person name="Kawagashira N."/>
            <person name="Kawashima T."/>
            <person name="Kojima M."/>
            <person name="Kondo S."/>
            <person name="Konno H."/>
            <person name="Nakano K."/>
            <person name="Ninomiya N."/>
            <person name="Nishio T."/>
            <person name="Okada M."/>
            <person name="Plessy C."/>
            <person name="Shibata K."/>
            <person name="Shiraki T."/>
            <person name="Suzuki S."/>
            <person name="Tagami M."/>
            <person name="Waki K."/>
            <person name="Watahiki A."/>
            <person name="Okamura-Oho Y."/>
            <person name="Suzuki H."/>
            <person name="Kawai J."/>
            <person name="Hayashizaki Y."/>
        </authorList>
    </citation>
    <scope>NUCLEOTIDE SEQUENCE [LARGE SCALE MRNA] OF 549-596</scope>
    <source>
        <strain>C57BL/6J</strain>
        <tissue>Embryo</tissue>
    </source>
</reference>
<reference key="4">
    <citation type="journal article" date="2008" name="J. Biol. Chem.">
        <title>A novel connexin43-interacting protein, CIP75, which belongs to the UbL-UBA protein family, regulates the turnover of connexin43.</title>
        <authorList>
            <person name="Li X."/>
            <person name="Su V."/>
            <person name="Kurata W.E."/>
            <person name="Jin C."/>
            <person name="Lau A.F."/>
        </authorList>
    </citation>
    <scope>FUNCTION</scope>
    <scope>SUBCELLULAR LOCATION</scope>
    <scope>INTERACTION WITH PSMD2; PSMD4 AND GJA1</scope>
</reference>
<reference key="5">
    <citation type="journal article" date="2010" name="Cell">
        <title>A tissue-specific atlas of mouse protein phosphorylation and expression.</title>
        <authorList>
            <person name="Huttlin E.L."/>
            <person name="Jedrychowski M.P."/>
            <person name="Elias J.E."/>
            <person name="Goswami T."/>
            <person name="Rad R."/>
            <person name="Beausoleil S.A."/>
            <person name="Villen J."/>
            <person name="Haas W."/>
            <person name="Sowa M.E."/>
            <person name="Gygi S.P."/>
        </authorList>
    </citation>
    <scope>IDENTIFICATION BY MASS SPECTROMETRY [LARGE SCALE ANALYSIS]</scope>
    <source>
        <tissue>Brain</tissue>
        <tissue>Heart</tissue>
        <tissue>Spleen</tissue>
        <tissue>Testis</tissue>
    </source>
</reference>
<reference key="6">
    <citation type="journal article" date="2010" name="J. Biol. Chem.">
        <title>Ubiquitin-independent proteasomal degradation of endoplasmic reticulum-localized connexin43 mediated by CIP75.</title>
        <authorList>
            <person name="Su V."/>
            <person name="Nakagawa R."/>
            <person name="Koval M."/>
            <person name="Lau A.F."/>
        </authorList>
    </citation>
    <scope>FUNCTION</scope>
    <scope>SUBCELLULAR LOCATION</scope>
    <scope>INTERACTION WITH UBIQUITIN AND GJA1</scope>
    <scope>TISSUE SPECIFICITY</scope>
</reference>
<reference key="7">
    <citation type="journal article" date="2010" name="J. Biomol. NMR">
        <title>NMR structure note: UBA domain of CIP75.</title>
        <authorList>
            <person name="Kieken F."/>
            <person name="Spagnol G."/>
            <person name="Su V."/>
            <person name="Lau A.F."/>
            <person name="Sorgen P.L."/>
        </authorList>
    </citation>
    <scope>STRUCTURE BY NMR OF 549-596</scope>
    <scope>INTERACTION WITH GJA1</scope>
</reference>
<comment type="function">
    <text evidence="1 7 9">Regulator of protein degradation that mediates the proteasomal targeting of misfolded, mislocalized or accumulated proteins (By similarity). Acts by binding polyubiquitin chains of target proteins via its UBA domain and by interacting with subunits of the proteasome via its ubiquitin-like domain (By similarity). Key regulator of DNA repair that represses homologous recombination repair: in response to DNA damage, recruited to sites of DNA damage following phosphorylation by ATM and acts by binding and removing ubiquitinated MRE11 from damaged chromatin, leading to MRE11 degradation by the proteasome (By similarity). MRE11 degradation prevents homologous recombination repair, redirecting double-strand break repair toward non-homologous end joining (NHEJ) (By similarity). Specifically recognizes and binds mislocalized transmembrane-containing proteins and targets them to proteasomal degradation (By similarity). Collaborates with DESI1/POST in the export of ubiquitinated proteins from the nucleus to the cytoplasm (By similarity). Plays a role in the regulation of the proteasomal degradation of non-ubiquitinated GJA1 (PubMed:18079109, PubMed:20940304). Acts as an adapter protein that recruits UBQLN1 to the autophagy machinery (By similarity). Mediates the association of UBQLN1 with autophagosomes and the autophagy-related protein LC3 (MAP1LC3A/B/C) and may assist in the maturation of autophagosomes to autolysosomes by mediating autophagosome-lysosome fusion (By similarity).</text>
</comment>
<comment type="subunit">
    <text evidence="1 6 7 8 9">Homooligomer (By similarity). Binds signal sequences of proteins that are targeted to the endoplasmic reticulum (PubMed:11162551). Interacts (via UBA domain) with GJA1 (not ubiquitinated) and with ubiquitin; both compete for the same binding site (PubMed:18079109, PubMed:20127391, PubMed:20940304). Interacts (via UBA domain) with ubiquitin and with polyubiquitin chains (PubMed:20940304). Interacts (via ubiquitin-like domain) with PSMD2 and PSMD4, regulatory subunits of the 26S proteasome (PubMed:18079109). Interacts with ATXN1/SCA1; interaction with ATXN1 inhibits polyubiquitination of UBQLN4 and interferes with PSMD4 binding (By similarity). Interacts with HERPUD1 (By similarity). Interacts (via ubiquitin-like domain) with UBQLN1 (via UBA domain) (By similarity). Interacts with UBQLN2 (By similarity). Interacts (via STI1 1 and 2 domains) with MAP1LC3A/B/C (By similarity). Interacts with BAG6 (By similarity). Interacts with MRE11 (when ubiquitinated); interaction with ubiquitinated MRE11 leads to MRE11 removal from chromatin (By similarity). Interacts with DESI1/POST; leading to nuclear export (By similarity). Interacts with BCL2A1 and BCL2L10 (By similarity).</text>
</comment>
<comment type="subcellular location">
    <subcellularLocation>
        <location evidence="6">Nucleus</location>
    </subcellularLocation>
    <subcellularLocation>
        <location evidence="1">Cytoplasm</location>
    </subcellularLocation>
    <subcellularLocation>
        <location evidence="1">Chromosome</location>
    </subcellularLocation>
    <subcellularLocation>
        <location evidence="6 7 9">Endoplasmic reticulum</location>
    </subcellularLocation>
    <subcellularLocation>
        <location evidence="7">Cytoplasm</location>
        <location evidence="7">Perinuclear region</location>
    </subcellularLocation>
    <subcellularLocation>
        <location evidence="1">Cytoplasmic vesicle</location>
        <location evidence="1">Autophagosome</location>
    </subcellularLocation>
    <text evidence="1">Colocalizes with the proteasome, both in nucleus and cytoplasm. Exported from the nucleus following interaction with DESI1/POST. In response to DNA damage and phosphorylation at Ser-318 by ATM, localizes to the nucleus and is recruited to sites of DNA damage.</text>
</comment>
<comment type="tissue specificity">
    <text evidence="6 9">Detected in testis, ovary, thyroid, kidney, thymus, heart, liver, lung and spleen (at protein level). Highly expressed in heart, skeletal muscle, kidney, liver and brain. Detected at lower levels in testis, lung and spleen.</text>
</comment>
<comment type="PTM">
    <text evidence="1">Phosphorylated by ATM at Ser-313 in response to DNA damage, leading to localization in the nucleus and recruitment to sites of DNA damage.</text>
</comment>
<comment type="PTM">
    <text evidence="1">Ubiquitinated; this does not lead to proteasomal degradation. May undergo both 'Lys-48'- and 'Lys-63'-linked polyubiquitination.</text>
</comment>
<feature type="chain" id="PRO_0000211016" description="Ubiquilin-4">
    <location>
        <begin position="1"/>
        <end position="596"/>
    </location>
</feature>
<feature type="domain" description="Ubiquitin-like" evidence="4">
    <location>
        <begin position="13"/>
        <end position="87"/>
    </location>
</feature>
<feature type="domain" description="STI1 1" evidence="2">
    <location>
        <begin position="187"/>
        <end position="224"/>
    </location>
</feature>
<feature type="domain" description="STI1 2" evidence="2">
    <location>
        <begin position="225"/>
        <end position="256"/>
    </location>
</feature>
<feature type="domain" description="STI1 3" evidence="2">
    <location>
        <begin position="388"/>
        <end position="435"/>
    </location>
</feature>
<feature type="domain" description="STI1 4" evidence="2">
    <location>
        <begin position="439"/>
        <end position="471"/>
    </location>
</feature>
<feature type="domain" description="UBA" evidence="3">
    <location>
        <begin position="548"/>
        <end position="593"/>
    </location>
</feature>
<feature type="region of interest" description="Disordered" evidence="5">
    <location>
        <begin position="89"/>
        <end position="148"/>
    </location>
</feature>
<feature type="region of interest" description="Disordered" evidence="5">
    <location>
        <begin position="297"/>
        <end position="361"/>
    </location>
</feature>
<feature type="region of interest" description="Disordered" evidence="5">
    <location>
        <begin position="482"/>
        <end position="528"/>
    </location>
</feature>
<feature type="compositionally biased region" description="Low complexity" evidence="5">
    <location>
        <begin position="93"/>
        <end position="119"/>
    </location>
</feature>
<feature type="compositionally biased region" description="Low complexity" evidence="5">
    <location>
        <begin position="139"/>
        <end position="148"/>
    </location>
</feature>
<feature type="compositionally biased region" description="Low complexity" evidence="5">
    <location>
        <begin position="302"/>
        <end position="313"/>
    </location>
</feature>
<feature type="compositionally biased region" description="Pro residues" evidence="5">
    <location>
        <begin position="324"/>
        <end position="335"/>
    </location>
</feature>
<feature type="compositionally biased region" description="Gly residues" evidence="5">
    <location>
        <begin position="339"/>
        <end position="349"/>
    </location>
</feature>
<feature type="compositionally biased region" description="Polar residues" evidence="5">
    <location>
        <begin position="352"/>
        <end position="361"/>
    </location>
</feature>
<feature type="compositionally biased region" description="Polar residues" evidence="5">
    <location>
        <begin position="499"/>
        <end position="513"/>
    </location>
</feature>
<feature type="modified residue" description="Phosphoserine" evidence="1">
    <location>
        <position position="139"/>
    </location>
</feature>
<feature type="modified residue" description="Phosphothreonine" evidence="1">
    <location>
        <position position="282"/>
    </location>
</feature>
<feature type="modified residue" description="Phosphoserine" evidence="1">
    <location>
        <position position="313"/>
    </location>
</feature>
<feature type="cross-link" description="Glycyl lysine isopeptide (Lys-Gly) (interchain with G-Cter in SUMO2)" evidence="1">
    <location>
        <position position="23"/>
    </location>
</feature>
<feature type="cross-link" description="Glycyl lysine isopeptide (Lys-Gly) (interchain with G-Cter in SUMO2)" evidence="1">
    <location>
        <position position="62"/>
    </location>
</feature>
<feature type="helix" evidence="14">
    <location>
        <begin position="551"/>
        <end position="562"/>
    </location>
</feature>
<feature type="turn" evidence="14">
    <location>
        <begin position="563"/>
        <end position="565"/>
    </location>
</feature>
<feature type="helix" evidence="14">
    <location>
        <begin position="569"/>
        <end position="579"/>
    </location>
</feature>
<feature type="helix" evidence="14">
    <location>
        <begin position="583"/>
        <end position="592"/>
    </location>
</feature>